<comment type="function">
    <text evidence="10">May function as a growth and differentiation factor involved in neuritogenesis. May induce ERBB3 activation.</text>
</comment>
<comment type="subunit">
    <text evidence="1 3 7">Binds TNR and probably TNC (By similarity). Interacts with ERBB3 and GOPC. Interacts with MDK; this interaction is independent of the presence of chondroitin sulfate chains and promotes elongation of oligodendroglial precursor-like cells (By similarity).</text>
</comment>
<comment type="subcellular location">
    <subcellularLocation>
        <location evidence="6">Cell membrane</location>
        <topology evidence="16">Single-pass type I membrane protein</topology>
    </subcellularLocation>
    <subcellularLocation>
        <location evidence="11">Synaptic cell membrane</location>
        <topology evidence="16">Single-pass type I membrane protein</topology>
    </subcellularLocation>
    <subcellularLocation>
        <location evidence="6">Endoplasmic reticulum membrane</location>
        <topology evidence="16">Single-pass type I membrane protein</topology>
    </subcellularLocation>
    <subcellularLocation>
        <location evidence="6 8">Golgi apparatus membrane</location>
        <topology evidence="16">Single-pass type I membrane protein</topology>
    </subcellularLocation>
    <subcellularLocation>
        <location evidence="9">Cell surface</location>
    </subcellularLocation>
    <subcellularLocation>
        <location evidence="2">Secreted</location>
    </subcellularLocation>
    <text evidence="3 6">Partially enriched in lipid rafts (By similarity). Also detected in the endoplasmic reticulum and the Golgi (PubMed:10617623).</text>
</comment>
<comment type="alternative products">
    <event type="alternative splicing"/>
    <isoform>
        <id>Q71M36-1</id>
        <name>1</name>
        <name>NGC-III</name>
        <sequence type="displayed"/>
    </isoform>
    <isoform>
        <id>Q71M36-2</id>
        <name>2</name>
        <name>NGC-I</name>
        <sequence type="described" ref="VSP_015763"/>
    </isoform>
    <isoform>
        <id>Q71M36-3</id>
        <name>3</name>
        <name>NGC-II</name>
        <sequence type="described" ref="VSP_015762 VSP_015763"/>
    </isoform>
    <isoform>
        <id>Q71M36-4</id>
        <name>4</name>
        <sequence type="described" ref="VSP_015764"/>
    </isoform>
</comment>
<comment type="tissue specificity">
    <text evidence="6 9 12">Expressed in olfactory bulb, hippocampus, brain stem, spinal cord, cerebrum and cerebellum. Expressed by Purkinje cells in the cerebellum (at protein level). Expressed in immature and mature cerebellum (isoform 1, isoform 2 and isoform 3).</text>
</comment>
<comment type="developmental stage">
    <text evidence="6">The proteoglycan form decreases from birth to adulthood in the cerebellum concomitant with non-proteoglycan form increase. In the cerebrum the maximum of expression of the proteoglycan is detected 15 days after birth and then decreases gradually to reach half-level at adulthood (at protein level).</text>
</comment>
<comment type="PTM">
    <text evidence="1">N-glycosylated.</text>
</comment>
<comment type="PTM">
    <text evidence="6 9">O-glycosylated; contains chondroitin sulfate glycans. Part-time proteoglycan, expressed in part as a proteoglycan exhibiting chondroitin sulfate glycans and in part as a non-proteoglycan form. The relative amount of both forms depends on tissues and tissue maturation. In the cerebellum the 2 forms coexist while in the cerebrum the proteoglycan form is predominant.</text>
</comment>
<comment type="PTM">
    <text evidence="1">Phosphorylated; in intracellular and extracellular parts.</text>
</comment>
<comment type="disruption phenotype">
    <text evidence="10">Altered synaptic transmission at early developmental stages.</text>
</comment>
<comment type="miscellaneous">
    <text>Different forms of various molecular weight have been observed. Such forms are possibly due to different levels of glycosylation, phosphorylation and/or protein cleavage.</text>
</comment>
<comment type="miscellaneous">
    <molecule>Isoform 2</molecule>
    <text evidence="16">Major isoform.</text>
</comment>
<comment type="sequence caution" evidence="16">
    <conflict type="erroneous initiation">
        <sequence resource="EMBL-CDS" id="AAQ04778"/>
    </conflict>
    <text>Truncated N-terminus.</text>
</comment>
<comment type="sequence caution" evidence="16">
    <conflict type="erroneous initiation">
        <sequence resource="EMBL-CDS" id="BAC35578"/>
    </conflict>
    <text>Truncated N-terminus.</text>
</comment>
<proteinExistence type="evidence at protein level"/>
<keyword id="KW-0025">Alternative splicing</keyword>
<keyword id="KW-1003">Cell membrane</keyword>
<keyword id="KW-0217">Developmental protein</keyword>
<keyword id="KW-0221">Differentiation</keyword>
<keyword id="KW-1015">Disulfide bond</keyword>
<keyword id="KW-0245">EGF-like domain</keyword>
<keyword id="KW-0256">Endoplasmic reticulum</keyword>
<keyword id="KW-0325">Glycoprotein</keyword>
<keyword id="KW-0333">Golgi apparatus</keyword>
<keyword id="KW-0341">Growth regulation</keyword>
<keyword id="KW-0472">Membrane</keyword>
<keyword id="KW-0524">Neurogenesis</keyword>
<keyword id="KW-0597">Phosphoprotein</keyword>
<keyword id="KW-0654">Proteoglycan</keyword>
<keyword id="KW-1185">Reference proteome</keyword>
<keyword id="KW-0964">Secreted</keyword>
<keyword id="KW-0732">Signal</keyword>
<keyword id="KW-0770">Synapse</keyword>
<keyword id="KW-0812">Transmembrane</keyword>
<keyword id="KW-1133">Transmembrane helix</keyword>
<sequence length="566" mass="60406">MGRAGGGGPDWGPPPVLLLLGVTLVLTAGAVPARETGSAIEAEELVRSSLAWESRANDTREEAGLPAAGEDETSWTERGSEMAAVGPGVGPEEALEASAAVTGTAWLEADGPGLGGVTAEAGSGDAQTLPATLQAPDEALGSSTMPPAIPEATETSGPPSPAVHDKPSVGPELPKEIPLEVRLNLGGSTPEPTFPLQGTLETQPASDIIDIDYFEGLDSEGRGADMGSFPGSPGTSENHPDTEGETPSWSLLDLYDDFTPFDESDFYPTTSFYDDLEEEEEEEEDKDTVGGGDLEDENDLLLPSQKPGVGPGTGQPTNRWHAVPPQHTLGMVPGSSISLRPRPGDPGKDLASGENGTECRVGFVRHNGSCRSVCDLFPSYCHNGGQCYLVENIGAFCRCNTQDYIWHKGMRCESIITDFQVMCVAVGSAALVLLLLFMMTVFFAKKLYLLKTENTKLRRTNKFRTPSELHNDNFSLSTIAEGSHPNVRKFCDTPRVSSPHARALAHYDNIVCQDDPSAPHKIQDPLKSRLKEEESFNIQNSMSPKLEGGKGDQDDLGVNCLQNNLT</sequence>
<feature type="signal peptide" evidence="4">
    <location>
        <begin position="1"/>
        <end position="30"/>
    </location>
</feature>
<feature type="chain" id="PRO_0000042152" description="Chondroitin sulfate proteoglycan 5">
    <location>
        <begin position="31"/>
        <end position="566"/>
    </location>
</feature>
<feature type="topological domain" description="Extracellular" evidence="4">
    <location>
        <begin position="31"/>
        <end position="423"/>
    </location>
</feature>
<feature type="transmembrane region" description="Helical" evidence="4">
    <location>
        <begin position="424"/>
        <end position="444"/>
    </location>
</feature>
<feature type="topological domain" description="Cytoplasmic" evidence="4">
    <location>
        <begin position="445"/>
        <end position="566"/>
    </location>
</feature>
<feature type="domain" description="EGF-like">
    <location>
        <begin position="371"/>
        <end position="413"/>
    </location>
</feature>
<feature type="region of interest" description="Disordered" evidence="5">
    <location>
        <begin position="56"/>
        <end position="93"/>
    </location>
</feature>
<feature type="region of interest" description="Disordered" evidence="5">
    <location>
        <begin position="137"/>
        <end position="173"/>
    </location>
</feature>
<feature type="region of interest" description="Disordered" evidence="5">
    <location>
        <begin position="218"/>
        <end position="249"/>
    </location>
</feature>
<feature type="region of interest" description="Disordered" evidence="5">
    <location>
        <begin position="263"/>
        <end position="327"/>
    </location>
</feature>
<feature type="region of interest" description="Interaction with TNC and TNR" evidence="7">
    <location>
        <begin position="265"/>
        <end position="301"/>
    </location>
</feature>
<feature type="region of interest" description="Interaction with GOPC" evidence="1">
    <location>
        <begin position="442"/>
        <end position="460"/>
    </location>
</feature>
<feature type="region of interest" description="Disordered" evidence="5">
    <location>
        <begin position="531"/>
        <end position="566"/>
    </location>
</feature>
<feature type="compositionally biased region" description="Basic and acidic residues" evidence="5">
    <location>
        <begin position="163"/>
        <end position="173"/>
    </location>
</feature>
<feature type="compositionally biased region" description="Acidic residues" evidence="5">
    <location>
        <begin position="274"/>
        <end position="286"/>
    </location>
</feature>
<feature type="modified residue" description="Phosphoserine" evidence="17">
    <location>
        <position position="467"/>
    </location>
</feature>
<feature type="modified residue" description="Phosphoserine" evidence="17">
    <location>
        <position position="475"/>
    </location>
</feature>
<feature type="modified residue" description="Phosphoserine" evidence="17">
    <location>
        <position position="483"/>
    </location>
</feature>
<feature type="modified residue" description="Phosphoserine" evidence="17">
    <location>
        <position position="543"/>
    </location>
</feature>
<feature type="glycosylation site" description="O-linked (Xyl...) (chondroitin sulfate) serine" evidence="2">
    <location>
        <position position="38"/>
    </location>
</feature>
<feature type="glycosylation site" description="N-linked (GlcNAc...) asparagine" evidence="4">
    <location>
        <position position="57"/>
    </location>
</feature>
<feature type="glycosylation site" description="O-linked (GalNAc...) threonine" evidence="4">
    <location>
        <position position="76"/>
    </location>
</feature>
<feature type="glycosylation site" description="O-linked (Xyl...) (chondroitin sulfate) serine" evidence="9">
    <location>
        <position position="123"/>
    </location>
</feature>
<feature type="glycosylation site" description="O-linked (GalNAc...) threonine" evidence="4">
    <location>
        <position position="132"/>
    </location>
</feature>
<feature type="glycosylation site" description="O-linked (GalNAc...) serine" evidence="4">
    <location>
        <position position="143"/>
    </location>
</feature>
<feature type="glycosylation site" description="O-linked (GalNAc...) threonine" evidence="4">
    <location>
        <position position="144"/>
    </location>
</feature>
<feature type="glycosylation site" description="O-linked (GalNAc...) threonine" evidence="4">
    <location>
        <position position="153"/>
    </location>
</feature>
<feature type="glycosylation site" description="O-linked (GalNAc...) threonine" evidence="4">
    <location>
        <position position="155"/>
    </location>
</feature>
<feature type="glycosylation site" description="O-linked (GalNAc...) serine" evidence="4">
    <location>
        <position position="156"/>
    </location>
</feature>
<feature type="glycosylation site" description="O-linked (GalNAc...) serine" evidence="4">
    <location>
        <position position="160"/>
    </location>
</feature>
<feature type="glycosylation site" description="O-linked (GalNAc...) threonine" evidence="4">
    <location>
        <position position="235"/>
    </location>
</feature>
<feature type="glycosylation site" description="N-linked (GlcNAc...) asparagine" evidence="4">
    <location>
        <position position="355"/>
    </location>
</feature>
<feature type="glycosylation site" description="N-linked (GlcNAc...) asparagine" evidence="4">
    <location>
        <position position="367"/>
    </location>
</feature>
<feature type="disulfide bond" evidence="1">
    <location>
        <begin position="374"/>
        <end position="387"/>
    </location>
</feature>
<feature type="disulfide bond" evidence="1">
    <location>
        <begin position="381"/>
        <end position="397"/>
    </location>
</feature>
<feature type="disulfide bond" evidence="1">
    <location>
        <begin position="399"/>
        <end position="412"/>
    </location>
</feature>
<feature type="splice variant" id="VSP_015762" description="In isoform 3." evidence="13">
    <location>
        <begin position="1"/>
        <end position="81"/>
    </location>
</feature>
<feature type="splice variant" id="VSP_015763" description="In isoform 2 and isoform 3." evidence="13 14">
    <location>
        <begin position="487"/>
        <end position="513"/>
    </location>
</feature>
<feature type="splice variant" id="VSP_015764" description="In isoform 4." evidence="15">
    <original>DDPSAPHKIQDPLKSRLKEEESFNIQNSMSPKLEGGKGDQDDLGVNCLQNNLT</original>
    <variation>VTYLPHISPFACLCPCLPLPPCPLALSQSRQSPNSFEDQLRATQWCRERCIDSLTV</variation>
    <location>
        <begin position="514"/>
        <end position="566"/>
    </location>
</feature>
<feature type="mutagenesis site" description="No effect on chondroitin sulfate attachment." evidence="9">
    <original>S</original>
    <variation>A</variation>
    <location>
        <position position="38"/>
    </location>
</feature>
<feature type="mutagenesis site" description="No chondroitin sulfate attachment. no effect on transport to the cell surface." evidence="9">
    <original>S</original>
    <variation>A</variation>
    <location>
        <position position="123"/>
    </location>
</feature>
<feature type="sequence conflict" description="In Ref. 1; AAF23362/AAQ04777/AAQ04778/AAQ04779." evidence="16" ref="1">
    <original>T</original>
    <variation>N</variation>
    <location>
        <position position="317"/>
    </location>
</feature>
<feature type="sequence conflict" description="In Ref. 3; AAH55736." evidence="16" ref="3">
    <original>N</original>
    <variation>H</variation>
    <location>
        <position position="318"/>
    </location>
</feature>
<feature type="modified residue" description="Phosphoserine" evidence="17">
    <location sequence="Q71M36-2">
        <position position="475"/>
    </location>
</feature>
<feature type="modified residue" description="Phosphoserine" evidence="17">
    <location sequence="Q71M36-2">
        <position position="477"/>
    </location>
</feature>
<feature type="modified residue" description="Phosphothreonine" evidence="17">
    <location sequence="Q71M36-2">
        <position position="478"/>
    </location>
</feature>
<feature type="modified residue" description="Phosphoserine" evidence="17">
    <location sequence="Q71M36-3">
        <position position="394"/>
    </location>
</feature>
<feature type="modified residue" description="Phosphoserine" evidence="17">
    <location sequence="Q71M36-3">
        <position position="396"/>
    </location>
</feature>
<feature type="modified residue" description="Phosphothreonine" evidence="17">
    <location sequence="Q71M36-3">
        <position position="397"/>
    </location>
</feature>
<dbReference type="EMBL" id="AF133700">
    <property type="protein sequence ID" value="AAF23362.1"/>
    <property type="molecule type" value="mRNA"/>
</dbReference>
<dbReference type="EMBL" id="AF461090">
    <property type="protein sequence ID" value="AAQ04777.1"/>
    <property type="molecule type" value="mRNA"/>
</dbReference>
<dbReference type="EMBL" id="AF461091">
    <property type="protein sequence ID" value="AAQ04778.1"/>
    <property type="status" value="ALT_INIT"/>
    <property type="molecule type" value="mRNA"/>
</dbReference>
<dbReference type="EMBL" id="AF461092">
    <property type="protein sequence ID" value="AAQ04779.1"/>
    <property type="molecule type" value="mRNA"/>
</dbReference>
<dbReference type="EMBL" id="AC159372">
    <property type="status" value="NOT_ANNOTATED_CDS"/>
    <property type="molecule type" value="Genomic_DNA"/>
</dbReference>
<dbReference type="EMBL" id="AC160104">
    <property type="status" value="NOT_ANNOTATED_CDS"/>
    <property type="molecule type" value="Genomic_DNA"/>
</dbReference>
<dbReference type="EMBL" id="BC055736">
    <property type="protein sequence ID" value="AAH55736.1"/>
    <property type="molecule type" value="mRNA"/>
</dbReference>
<dbReference type="EMBL" id="AK053891">
    <property type="protein sequence ID" value="BAC35578.1"/>
    <property type="status" value="ALT_INIT"/>
    <property type="molecule type" value="mRNA"/>
</dbReference>
<dbReference type="CCDS" id="CCDS52936.1">
    <molecule id="Q71M36-1"/>
</dbReference>
<dbReference type="CCDS" id="CCDS81085.1">
    <molecule id="Q71M36-2"/>
</dbReference>
<dbReference type="RefSeq" id="NP_001159745.1">
    <molecule id="Q71M36-1"/>
    <property type="nucleotide sequence ID" value="NM_001166273.1"/>
</dbReference>
<dbReference type="RefSeq" id="NP_038912.3">
    <molecule id="Q71M36-2"/>
    <property type="nucleotide sequence ID" value="NM_013884.3"/>
</dbReference>
<dbReference type="BioGRID" id="205937">
    <property type="interactions" value="2"/>
</dbReference>
<dbReference type="FunCoup" id="Q71M36">
    <property type="interactions" value="472"/>
</dbReference>
<dbReference type="STRING" id="10090.ENSMUSP00000035058"/>
<dbReference type="GlyConnect" id="2214">
    <property type="glycosylation" value="5 N-Linked glycans (1 site)"/>
</dbReference>
<dbReference type="GlyCosmos" id="Q71M36">
    <property type="glycosylation" value="13 sites, 5 glycans"/>
</dbReference>
<dbReference type="GlyGen" id="Q71M36">
    <property type="glycosylation" value="16 sites, 7 N-linked glycans (3 sites), 1 O-linked glycan (1 site)"/>
</dbReference>
<dbReference type="iPTMnet" id="Q71M36"/>
<dbReference type="PhosphoSitePlus" id="Q71M36"/>
<dbReference type="SwissPalm" id="Q71M36"/>
<dbReference type="PaxDb" id="10090-ENSMUSP00000035058"/>
<dbReference type="PeptideAtlas" id="Q71M36"/>
<dbReference type="ProteomicsDB" id="284043">
    <molecule id="Q71M36-1"/>
</dbReference>
<dbReference type="ProteomicsDB" id="284044">
    <molecule id="Q71M36-2"/>
</dbReference>
<dbReference type="ProteomicsDB" id="284045">
    <molecule id="Q71M36-3"/>
</dbReference>
<dbReference type="ProteomicsDB" id="284046">
    <molecule id="Q71M36-4"/>
</dbReference>
<dbReference type="Antibodypedia" id="29949">
    <property type="antibodies" value="259 antibodies from 31 providers"/>
</dbReference>
<dbReference type="DNASU" id="29873"/>
<dbReference type="Ensembl" id="ENSMUST00000035058.10">
    <molecule id="Q71M36-1"/>
    <property type="protein sequence ID" value="ENSMUSP00000035058.6"/>
    <property type="gene ID" value="ENSMUSG00000032482.10"/>
</dbReference>
<dbReference type="Ensembl" id="ENSMUST00000196060.5">
    <molecule id="Q71M36-2"/>
    <property type="protein sequence ID" value="ENSMUSP00000143164.2"/>
    <property type="gene ID" value="ENSMUSG00000032482.10"/>
</dbReference>
<dbReference type="Ensembl" id="ENSMUST00000197850.5">
    <molecule id="Q71M36-4"/>
    <property type="protein sequence ID" value="ENSMUSP00000143005.2"/>
    <property type="gene ID" value="ENSMUSG00000032482.10"/>
</dbReference>
<dbReference type="Ensembl" id="ENSMUST00000199736.2">
    <molecule id="Q71M36-3"/>
    <property type="protein sequence ID" value="ENSMUSP00000142845.2"/>
    <property type="gene ID" value="ENSMUSG00000032482.10"/>
</dbReference>
<dbReference type="GeneID" id="29873"/>
<dbReference type="KEGG" id="mmu:29873"/>
<dbReference type="UCSC" id="uc009rtq.2">
    <molecule id="Q71M36-1"/>
    <property type="organism name" value="mouse"/>
</dbReference>
<dbReference type="UCSC" id="uc009rtr.2">
    <molecule id="Q71M36-2"/>
    <property type="organism name" value="mouse"/>
</dbReference>
<dbReference type="UCSC" id="uc009rtt.1">
    <molecule id="Q71M36-3"/>
    <property type="organism name" value="mouse"/>
</dbReference>
<dbReference type="UCSC" id="uc009rtu.1">
    <molecule id="Q71M36-4"/>
    <property type="organism name" value="mouse"/>
</dbReference>
<dbReference type="AGR" id="MGI:1352747"/>
<dbReference type="CTD" id="10675"/>
<dbReference type="MGI" id="MGI:1352747">
    <property type="gene designation" value="Cspg5"/>
</dbReference>
<dbReference type="VEuPathDB" id="HostDB:ENSMUSG00000032482"/>
<dbReference type="eggNOG" id="ENOG502QXSB">
    <property type="taxonomic scope" value="Eukaryota"/>
</dbReference>
<dbReference type="GeneTree" id="ENSGT00440000034270"/>
<dbReference type="InParanoid" id="Q71M36"/>
<dbReference type="OMA" id="WEPHAND"/>
<dbReference type="OrthoDB" id="64620at9989"/>
<dbReference type="PhylomeDB" id="Q71M36"/>
<dbReference type="TreeFam" id="TF338636"/>
<dbReference type="Reactome" id="R-MMU-1971475">
    <property type="pathway name" value="A tetrasaccharide linker sequence is required for GAG synthesis"/>
</dbReference>
<dbReference type="Reactome" id="R-MMU-2022870">
    <property type="pathway name" value="Chondroitin sulfate biosynthesis"/>
</dbReference>
<dbReference type="Reactome" id="R-MMU-2022923">
    <property type="pathway name" value="Dermatan sulfate biosynthesis"/>
</dbReference>
<dbReference type="Reactome" id="R-MMU-2024101">
    <property type="pathway name" value="CS/DS degradation"/>
</dbReference>
<dbReference type="BioGRID-ORCS" id="29873">
    <property type="hits" value="0 hits in 81 CRISPR screens"/>
</dbReference>
<dbReference type="CD-CODE" id="CE726F99">
    <property type="entry name" value="Postsynaptic density"/>
</dbReference>
<dbReference type="ChiTaRS" id="Cspg5">
    <property type="organism name" value="mouse"/>
</dbReference>
<dbReference type="PRO" id="PR:Q71M36"/>
<dbReference type="Proteomes" id="UP000000589">
    <property type="component" value="Chromosome 9"/>
</dbReference>
<dbReference type="RNAct" id="Q71M36">
    <property type="molecule type" value="protein"/>
</dbReference>
<dbReference type="Bgee" id="ENSMUSG00000032482">
    <property type="expression patterns" value="Expressed in visual cortex and 148 other cell types or tissues"/>
</dbReference>
<dbReference type="GO" id="GO:0009986">
    <property type="term" value="C:cell surface"/>
    <property type="evidence" value="ECO:0007669"/>
    <property type="project" value="UniProtKB-SubCell"/>
</dbReference>
<dbReference type="GO" id="GO:0005789">
    <property type="term" value="C:endoplasmic reticulum membrane"/>
    <property type="evidence" value="ECO:0007669"/>
    <property type="project" value="UniProtKB-SubCell"/>
</dbReference>
<dbReference type="GO" id="GO:0005576">
    <property type="term" value="C:extracellular region"/>
    <property type="evidence" value="ECO:0007669"/>
    <property type="project" value="UniProtKB-SubCell"/>
</dbReference>
<dbReference type="GO" id="GO:0098982">
    <property type="term" value="C:GABA-ergic synapse"/>
    <property type="evidence" value="ECO:0000314"/>
    <property type="project" value="SynGO"/>
</dbReference>
<dbReference type="GO" id="GO:0098978">
    <property type="term" value="C:glutamatergic synapse"/>
    <property type="evidence" value="ECO:0000314"/>
    <property type="project" value="SynGO"/>
</dbReference>
<dbReference type="GO" id="GO:0005794">
    <property type="term" value="C:Golgi apparatus"/>
    <property type="evidence" value="ECO:0000250"/>
    <property type="project" value="UniProtKB"/>
</dbReference>
<dbReference type="GO" id="GO:0000139">
    <property type="term" value="C:Golgi membrane"/>
    <property type="evidence" value="ECO:0007669"/>
    <property type="project" value="UniProtKB-SubCell"/>
</dbReference>
<dbReference type="GO" id="GO:0030660">
    <property type="term" value="C:Golgi-associated vesicle membrane"/>
    <property type="evidence" value="ECO:0000250"/>
    <property type="project" value="UniProtKB"/>
</dbReference>
<dbReference type="GO" id="GO:0045211">
    <property type="term" value="C:postsynaptic membrane"/>
    <property type="evidence" value="ECO:0000314"/>
    <property type="project" value="SynGO"/>
</dbReference>
<dbReference type="GO" id="GO:0007010">
    <property type="term" value="P:cytoskeleton organization"/>
    <property type="evidence" value="ECO:0000250"/>
    <property type="project" value="UniProtKB"/>
</dbReference>
<dbReference type="GO" id="GO:0106091">
    <property type="term" value="P:glial cell projection elongation"/>
    <property type="evidence" value="ECO:0000250"/>
    <property type="project" value="UniProtKB"/>
</dbReference>
<dbReference type="GO" id="GO:0050804">
    <property type="term" value="P:modulation of chemical synaptic transmission"/>
    <property type="evidence" value="ECO:0000315"/>
    <property type="project" value="MGI"/>
</dbReference>
<dbReference type="GO" id="GO:1900026">
    <property type="term" value="P:positive regulation of substrate adhesion-dependent cell spreading"/>
    <property type="evidence" value="ECO:0000250"/>
    <property type="project" value="UniProtKB"/>
</dbReference>
<dbReference type="GO" id="GO:2000300">
    <property type="term" value="P:regulation of synaptic vesicle exocytosis"/>
    <property type="evidence" value="ECO:0000314"/>
    <property type="project" value="SynGO"/>
</dbReference>
<dbReference type="InterPro" id="IPR010555">
    <property type="entry name" value="CSPG5_S_attach_dom"/>
</dbReference>
<dbReference type="InterPro" id="IPR009505">
    <property type="entry name" value="Neural_ProG_Cyt"/>
</dbReference>
<dbReference type="PANTHER" id="PTHR15381:SF2">
    <property type="entry name" value="CHONDROITIN SULFATE PROTEOGLYCAN 5"/>
    <property type="match status" value="1"/>
</dbReference>
<dbReference type="PANTHER" id="PTHR15381">
    <property type="entry name" value="CHONDROITIN SULFATE PROTEOGLYCAN 5 -RELATED"/>
    <property type="match status" value="1"/>
</dbReference>
<dbReference type="Pfam" id="PF06566">
    <property type="entry name" value="Chon_Sulph_att"/>
    <property type="match status" value="1"/>
</dbReference>
<dbReference type="Pfam" id="PF06567">
    <property type="entry name" value="Neural_ProG_Cyt"/>
    <property type="match status" value="1"/>
</dbReference>
<organism>
    <name type="scientific">Mus musculus</name>
    <name type="common">Mouse</name>
    <dbReference type="NCBI Taxonomy" id="10090"/>
    <lineage>
        <taxon>Eukaryota</taxon>
        <taxon>Metazoa</taxon>
        <taxon>Chordata</taxon>
        <taxon>Craniata</taxon>
        <taxon>Vertebrata</taxon>
        <taxon>Euteleostomi</taxon>
        <taxon>Mammalia</taxon>
        <taxon>Eutheria</taxon>
        <taxon>Euarchontoglires</taxon>
        <taxon>Glires</taxon>
        <taxon>Rodentia</taxon>
        <taxon>Myomorpha</taxon>
        <taxon>Muroidea</taxon>
        <taxon>Muridae</taxon>
        <taxon>Murinae</taxon>
        <taxon>Mus</taxon>
        <taxon>Mus</taxon>
    </lineage>
</organism>
<accession>Q71M36</accession>
<accession>E9QN54</accession>
<accession>Q71M37</accession>
<accession>Q7TNT8</accession>
<accession>Q8BPJ5</accession>
<accession>Q9QY32</accession>
<evidence type="ECO:0000250" key="1"/>
<evidence type="ECO:0000250" key="2">
    <source>
        <dbReference type="UniProtKB" id="O95196"/>
    </source>
</evidence>
<evidence type="ECO:0000250" key="3">
    <source>
        <dbReference type="UniProtKB" id="Q9ERQ6"/>
    </source>
</evidence>
<evidence type="ECO:0000255" key="4"/>
<evidence type="ECO:0000256" key="5">
    <source>
        <dbReference type="SAM" id="MobiDB-lite"/>
    </source>
</evidence>
<evidence type="ECO:0000269" key="6">
    <source>
    </source>
</evidence>
<evidence type="ECO:0000269" key="7">
    <source>
    </source>
</evidence>
<evidence type="ECO:0000269" key="8">
    <source>
    </source>
</evidence>
<evidence type="ECO:0000269" key="9">
    <source>
    </source>
</evidence>
<evidence type="ECO:0000269" key="10">
    <source>
    </source>
</evidence>
<evidence type="ECO:0000269" key="11">
    <source>
    </source>
</evidence>
<evidence type="ECO:0000269" key="12">
    <source>
    </source>
</evidence>
<evidence type="ECO:0000303" key="13">
    <source>
    </source>
</evidence>
<evidence type="ECO:0000303" key="14">
    <source>
    </source>
</evidence>
<evidence type="ECO:0000303" key="15">
    <source>
    </source>
</evidence>
<evidence type="ECO:0000305" key="16"/>
<evidence type="ECO:0007744" key="17">
    <source>
    </source>
</evidence>
<protein>
    <recommendedName>
        <fullName>Chondroitin sulfate proteoglycan 5</fullName>
    </recommendedName>
    <alternativeName>
        <fullName>Acidic leucine-rich EGF-like domain-containing brain protein</fullName>
    </alternativeName>
    <alternativeName>
        <fullName>Neuroglycan C</fullName>
    </alternativeName>
</protein>
<name>CSPG5_MOUSE</name>
<reference key="1">
    <citation type="journal article" date="2000" name="J. Biol. Chem.">
        <title>Genomic organization and expression pattern of mouse neuroglycan C in the cerebellar development.</title>
        <authorList>
            <person name="Aono S."/>
            <person name="Keino H."/>
            <person name="Ono T."/>
            <person name="Yasuda Y."/>
            <person name="Tokita Y."/>
            <person name="Matsui F."/>
            <person name="Taniguchi M."/>
            <person name="Sonta S."/>
            <person name="Oohira A."/>
        </authorList>
    </citation>
    <scope>NUCLEOTIDE SEQUENCE [MRNA] (ISOFORMS 1; 2 AND 3)</scope>
    <scope>TISSUE SPECIFICITY</scope>
    <scope>GLYCOSYLATION</scope>
    <scope>SUBCELLULAR LOCATION</scope>
    <scope>DEVELOPMENTAL STAGE</scope>
    <source>
        <strain>C57BL/6J</strain>
        <tissue>Brain</tissue>
    </source>
</reference>
<reference key="2">
    <citation type="journal article" date="2009" name="PLoS Biol.">
        <title>Lineage-specific biology revealed by a finished genome assembly of the mouse.</title>
        <authorList>
            <person name="Church D.M."/>
            <person name="Goodstadt L."/>
            <person name="Hillier L.W."/>
            <person name="Zody M.C."/>
            <person name="Goldstein S."/>
            <person name="She X."/>
            <person name="Bult C.J."/>
            <person name="Agarwala R."/>
            <person name="Cherry J.L."/>
            <person name="DiCuccio M."/>
            <person name="Hlavina W."/>
            <person name="Kapustin Y."/>
            <person name="Meric P."/>
            <person name="Maglott D."/>
            <person name="Birtle Z."/>
            <person name="Marques A.C."/>
            <person name="Graves T."/>
            <person name="Zhou S."/>
            <person name="Teague B."/>
            <person name="Potamousis K."/>
            <person name="Churas C."/>
            <person name="Place M."/>
            <person name="Herschleb J."/>
            <person name="Runnheim R."/>
            <person name="Forrest D."/>
            <person name="Amos-Landgraf J."/>
            <person name="Schwartz D.C."/>
            <person name="Cheng Z."/>
            <person name="Lindblad-Toh K."/>
            <person name="Eichler E.E."/>
            <person name="Ponting C.P."/>
        </authorList>
    </citation>
    <scope>NUCLEOTIDE SEQUENCE [LARGE SCALE GENOMIC DNA]</scope>
    <source>
        <strain>C57BL/6J</strain>
    </source>
</reference>
<reference key="3">
    <citation type="journal article" date="2004" name="Genome Res.">
        <title>The status, quality, and expansion of the NIH full-length cDNA project: the Mammalian Gene Collection (MGC).</title>
        <authorList>
            <consortium name="The MGC Project Team"/>
        </authorList>
    </citation>
    <scope>NUCLEOTIDE SEQUENCE [LARGE SCALE MRNA] (ISOFORM 2)</scope>
    <source>
        <strain>C57BL/6J</strain>
        <tissue>Brain</tissue>
    </source>
</reference>
<reference key="4">
    <citation type="journal article" date="2005" name="Science">
        <title>The transcriptional landscape of the mammalian genome.</title>
        <authorList>
            <person name="Carninci P."/>
            <person name="Kasukawa T."/>
            <person name="Katayama S."/>
            <person name="Gough J."/>
            <person name="Frith M.C."/>
            <person name="Maeda N."/>
            <person name="Oyama R."/>
            <person name="Ravasi T."/>
            <person name="Lenhard B."/>
            <person name="Wells C."/>
            <person name="Kodzius R."/>
            <person name="Shimokawa K."/>
            <person name="Bajic V.B."/>
            <person name="Brenner S.E."/>
            <person name="Batalov S."/>
            <person name="Forrest A.R."/>
            <person name="Zavolan M."/>
            <person name="Davis M.J."/>
            <person name="Wilming L.G."/>
            <person name="Aidinis V."/>
            <person name="Allen J.E."/>
            <person name="Ambesi-Impiombato A."/>
            <person name="Apweiler R."/>
            <person name="Aturaliya R.N."/>
            <person name="Bailey T.L."/>
            <person name="Bansal M."/>
            <person name="Baxter L."/>
            <person name="Beisel K.W."/>
            <person name="Bersano T."/>
            <person name="Bono H."/>
            <person name="Chalk A.M."/>
            <person name="Chiu K.P."/>
            <person name="Choudhary V."/>
            <person name="Christoffels A."/>
            <person name="Clutterbuck D.R."/>
            <person name="Crowe M.L."/>
            <person name="Dalla E."/>
            <person name="Dalrymple B.P."/>
            <person name="de Bono B."/>
            <person name="Della Gatta G."/>
            <person name="di Bernardo D."/>
            <person name="Down T."/>
            <person name="Engstrom P."/>
            <person name="Fagiolini M."/>
            <person name="Faulkner G."/>
            <person name="Fletcher C.F."/>
            <person name="Fukushima T."/>
            <person name="Furuno M."/>
            <person name="Futaki S."/>
            <person name="Gariboldi M."/>
            <person name="Georgii-Hemming P."/>
            <person name="Gingeras T.R."/>
            <person name="Gojobori T."/>
            <person name="Green R.E."/>
            <person name="Gustincich S."/>
            <person name="Harbers M."/>
            <person name="Hayashi Y."/>
            <person name="Hensch T.K."/>
            <person name="Hirokawa N."/>
            <person name="Hill D."/>
            <person name="Huminiecki L."/>
            <person name="Iacono M."/>
            <person name="Ikeo K."/>
            <person name="Iwama A."/>
            <person name="Ishikawa T."/>
            <person name="Jakt M."/>
            <person name="Kanapin A."/>
            <person name="Katoh M."/>
            <person name="Kawasawa Y."/>
            <person name="Kelso J."/>
            <person name="Kitamura H."/>
            <person name="Kitano H."/>
            <person name="Kollias G."/>
            <person name="Krishnan S.P."/>
            <person name="Kruger A."/>
            <person name="Kummerfeld S.K."/>
            <person name="Kurochkin I.V."/>
            <person name="Lareau L.F."/>
            <person name="Lazarevic D."/>
            <person name="Lipovich L."/>
            <person name="Liu J."/>
            <person name="Liuni S."/>
            <person name="McWilliam S."/>
            <person name="Madan Babu M."/>
            <person name="Madera M."/>
            <person name="Marchionni L."/>
            <person name="Matsuda H."/>
            <person name="Matsuzawa S."/>
            <person name="Miki H."/>
            <person name="Mignone F."/>
            <person name="Miyake S."/>
            <person name="Morris K."/>
            <person name="Mottagui-Tabar S."/>
            <person name="Mulder N."/>
            <person name="Nakano N."/>
            <person name="Nakauchi H."/>
            <person name="Ng P."/>
            <person name="Nilsson R."/>
            <person name="Nishiguchi S."/>
            <person name="Nishikawa S."/>
            <person name="Nori F."/>
            <person name="Ohara O."/>
            <person name="Okazaki Y."/>
            <person name="Orlando V."/>
            <person name="Pang K.C."/>
            <person name="Pavan W.J."/>
            <person name="Pavesi G."/>
            <person name="Pesole G."/>
            <person name="Petrovsky N."/>
            <person name="Piazza S."/>
            <person name="Reed J."/>
            <person name="Reid J.F."/>
            <person name="Ring B.Z."/>
            <person name="Ringwald M."/>
            <person name="Rost B."/>
            <person name="Ruan Y."/>
            <person name="Salzberg S.L."/>
            <person name="Sandelin A."/>
            <person name="Schneider C."/>
            <person name="Schoenbach C."/>
            <person name="Sekiguchi K."/>
            <person name="Semple C.A."/>
            <person name="Seno S."/>
            <person name="Sessa L."/>
            <person name="Sheng Y."/>
            <person name="Shibata Y."/>
            <person name="Shimada H."/>
            <person name="Shimada K."/>
            <person name="Silva D."/>
            <person name="Sinclair B."/>
            <person name="Sperling S."/>
            <person name="Stupka E."/>
            <person name="Sugiura K."/>
            <person name="Sultana R."/>
            <person name="Takenaka Y."/>
            <person name="Taki K."/>
            <person name="Tammoja K."/>
            <person name="Tan S.L."/>
            <person name="Tang S."/>
            <person name="Taylor M.S."/>
            <person name="Tegner J."/>
            <person name="Teichmann S.A."/>
            <person name="Ueda H.R."/>
            <person name="van Nimwegen E."/>
            <person name="Verardo R."/>
            <person name="Wei C.L."/>
            <person name="Yagi K."/>
            <person name="Yamanishi H."/>
            <person name="Zabarovsky E."/>
            <person name="Zhu S."/>
            <person name="Zimmer A."/>
            <person name="Hide W."/>
            <person name="Bult C."/>
            <person name="Grimmond S.M."/>
            <person name="Teasdale R.D."/>
            <person name="Liu E.T."/>
            <person name="Brusic V."/>
            <person name="Quackenbush J."/>
            <person name="Wahlestedt C."/>
            <person name="Mattick J.S."/>
            <person name="Hume D.A."/>
            <person name="Kai C."/>
            <person name="Sasaki D."/>
            <person name="Tomaru Y."/>
            <person name="Fukuda S."/>
            <person name="Kanamori-Katayama M."/>
            <person name="Suzuki M."/>
            <person name="Aoki J."/>
            <person name="Arakawa T."/>
            <person name="Iida J."/>
            <person name="Imamura K."/>
            <person name="Itoh M."/>
            <person name="Kato T."/>
            <person name="Kawaji H."/>
            <person name="Kawagashira N."/>
            <person name="Kawashima T."/>
            <person name="Kojima M."/>
            <person name="Kondo S."/>
            <person name="Konno H."/>
            <person name="Nakano K."/>
            <person name="Ninomiya N."/>
            <person name="Nishio T."/>
            <person name="Okada M."/>
            <person name="Plessy C."/>
            <person name="Shibata K."/>
            <person name="Shiraki T."/>
            <person name="Suzuki S."/>
            <person name="Tagami M."/>
            <person name="Waki K."/>
            <person name="Watahiki A."/>
            <person name="Okamura-Oho Y."/>
            <person name="Suzuki H."/>
            <person name="Kawai J."/>
            <person name="Hayashizaki Y."/>
        </authorList>
    </citation>
    <scope>NUCLEOTIDE SEQUENCE [LARGE SCALE MRNA] OF 202-566 (ISOFORM 4)</scope>
    <source>
        <strain>C57BL/6J</strain>
        <tissue>Eye</tissue>
    </source>
</reference>
<reference key="5">
    <citation type="journal article" date="1998" name="Neurosci. Res.">
        <title>Cloning and chromosomal mapping of the human gene of neuroglycan C (NGC), a neural transmembrane chondroitin sulfate proteoglycan with an EGF module.</title>
        <authorList>
            <person name="Yasuda Y."/>
            <person name="Tokita Y."/>
            <person name="Aono S."/>
            <person name="Matsui F."/>
            <person name="Ono T."/>
            <person name="Sonta S."/>
            <person name="Watanabe E."/>
            <person name="Nakanishi Y."/>
            <person name="Oohira A."/>
        </authorList>
    </citation>
    <scope>TISSUE SPECIFICITY</scope>
</reference>
<reference key="6">
    <citation type="journal article" date="2001" name="J. Biol. Chem.">
        <title>CALEB binds via its acidic stretch to the fibrinogen-like domain of tenascin-C or tenascin-R and its expression is dynamically regulated after optic nerve lesion.</title>
        <authorList>
            <person name="Schumacher S."/>
            <person name="Jung M."/>
            <person name="Noerenberg U."/>
            <person name="Dorner A."/>
            <person name="Chiquet-Ehrismann R."/>
            <person name="Stuermer C.A.O."/>
            <person name="Rathjen F.G."/>
        </authorList>
    </citation>
    <scope>INTERACTION WITH TNR</scope>
</reference>
<reference key="7">
    <citation type="journal article" date="2003" name="J. Biol. Chem.">
        <title>CALEB/NGC interacts with the Golgi-associated protein PIST.</title>
        <authorList>
            <person name="Hassel B."/>
            <person name="Schreff M."/>
            <person name="Stuebe E.-M."/>
            <person name="Blaich U."/>
            <person name="Schumacher S."/>
        </authorList>
    </citation>
    <scope>SUBCELLULAR LOCATION</scope>
</reference>
<reference key="8">
    <citation type="journal article" date="2004" name="J. Biol. Chem.">
        <title>Glycosylation site for chondroitin sulfate on the neural part-time proteoglycan, neuroglycan C.</title>
        <authorList>
            <person name="Aono S."/>
            <person name="Tokita Y."/>
            <person name="Shuo T."/>
            <person name="Yamauchi S."/>
            <person name="Matsui F."/>
            <person name="Nakanishi K."/>
            <person name="Hirano K."/>
            <person name="Sano M."/>
            <person name="Oohira A."/>
        </authorList>
    </citation>
    <scope>TISSUE SPECIFICITY</scope>
    <scope>MUTAGENESIS OF SER-38 AND SER-123</scope>
    <scope>GLYCOSYLATION AT SER-123</scope>
    <scope>SUBCELLULAR LOCATION</scope>
</reference>
<reference key="9">
    <citation type="journal article" date="2005" name="Neuron">
        <title>Impaired synapse function during postnatal development in the absence of CALEB, an EGF-like protein processed by neuronal activity.</title>
        <authorList>
            <person name="Juettner R."/>
            <person name="More M.I."/>
            <person name="Das D."/>
            <person name="Babich A."/>
            <person name="Meier J."/>
            <person name="Henning M."/>
            <person name="Erdmann B."/>
            <person name="Mueller E.-C."/>
            <person name="Otto A."/>
            <person name="Grantyn R."/>
            <person name="Rathjen F.G."/>
        </authorList>
    </citation>
    <scope>FUNCTION</scope>
    <scope>DISRUPTION PHENOTYPE</scope>
</reference>
<reference key="10">
    <citation type="journal article" date="2010" name="Cell">
        <title>A tissue-specific atlas of mouse protein phosphorylation and expression.</title>
        <authorList>
            <person name="Huttlin E.L."/>
            <person name="Jedrychowski M.P."/>
            <person name="Elias J.E."/>
            <person name="Goswami T."/>
            <person name="Rad R."/>
            <person name="Beausoleil S.A."/>
            <person name="Villen J."/>
            <person name="Haas W."/>
            <person name="Sowa M.E."/>
            <person name="Gygi S.P."/>
        </authorList>
    </citation>
    <scope>PHOSPHORYLATION [LARGE SCALE ANALYSIS] AT SER-467; SER-475; SER-483 AND SER-543</scope>
    <scope>PHOSPHORYLATION [LARGE SCALE ANALYSIS] AT SER-475; SER-477 AND THR-478 (ISOFORM 2)</scope>
    <scope>PHOSPHORYLATION [LARGE SCALE ANALYSIS] AT SER-394; SER-396 AND THR-397 (ISOFORM 3)</scope>
    <scope>IDENTIFICATION BY MASS SPECTROMETRY [LARGE SCALE ANALYSIS]</scope>
    <source>
        <tissue>Brain</tissue>
    </source>
</reference>
<gene>
    <name type="primary">Cspg5</name>
    <name type="synonym">Caleb</name>
    <name evidence="13" type="synonym">Ngc</name>
</gene>